<feature type="initiator methionine" description="Removed; by host" evidence="1">
    <location>
        <position position="1"/>
    </location>
</feature>
<feature type="chain" id="PRO_0000426611" description="Genome polyprotein">
    <location>
        <begin position="2"/>
        <end position="2207"/>
    </location>
</feature>
<feature type="chain" id="PRO_0000426612" description="P1">
    <location>
        <begin position="2"/>
        <end position="879"/>
    </location>
</feature>
<feature type="chain" id="PRO_0000426613" description="Capsid protein VP0">
    <location>
        <begin position="2"/>
        <end position="340"/>
    </location>
</feature>
<feature type="chain" id="PRO_0000426614" description="Capsid protein VP4">
    <location>
        <begin position="2"/>
        <end position="69"/>
    </location>
</feature>
<feature type="chain" id="PRO_0000426615" description="Capsid protein VP2">
    <location>
        <begin position="70"/>
        <end position="340"/>
    </location>
</feature>
<feature type="chain" id="PRO_0000426616" description="Capsid protein VP3">
    <location>
        <begin position="341"/>
        <end position="578"/>
    </location>
</feature>
<feature type="chain" id="PRO_0000426617" description="Capsid protein VP1">
    <location>
        <begin position="579"/>
        <end position="879"/>
    </location>
</feature>
<feature type="chain" id="PRO_0000426618" description="P2">
    <location>
        <begin position="880"/>
        <end position="1454"/>
    </location>
</feature>
<feature type="chain" id="PRO_0000426619" description="Protease 2A">
    <location>
        <begin position="880"/>
        <end position="1028"/>
    </location>
</feature>
<feature type="chain" id="PRO_0000040107" description="Protein 2B">
    <location>
        <begin position="1029"/>
        <end position="1125"/>
    </location>
</feature>
<feature type="chain" id="PRO_0000040108" description="Protein 2C">
    <location>
        <begin position="1126"/>
        <end position="1454"/>
    </location>
</feature>
<feature type="chain" id="PRO_0000426620" description="P3">
    <location>
        <begin position="1455"/>
        <end position="2207"/>
    </location>
</feature>
<feature type="chain" id="PRO_0000426621" description="Protein 3AB">
    <location>
        <begin position="1455"/>
        <end position="1563"/>
    </location>
</feature>
<feature type="chain" id="PRO_0000040109" description="Protein 3A">
    <location>
        <begin position="1455"/>
        <end position="1541"/>
    </location>
</feature>
<feature type="chain" id="PRO_0000426622" description="Viral protein genome-linked">
    <location>
        <begin position="1542"/>
        <end position="1563"/>
    </location>
</feature>
<feature type="chain" id="PRO_0000426623" description="Protein 3CD">
    <location>
        <begin position="1564"/>
        <end position="2207"/>
    </location>
</feature>
<feature type="chain" id="PRO_0000426624" description="Protease 3C">
    <location>
        <begin position="1564"/>
        <end position="1746"/>
    </location>
</feature>
<feature type="chain" id="PRO_0000426625" description="RNA-directed RNA polymerase">
    <location>
        <begin position="1747"/>
        <end position="2207"/>
    </location>
</feature>
<feature type="topological domain" description="Cytoplasmic" evidence="8">
    <location>
        <begin position="2"/>
        <end position="1518"/>
    </location>
</feature>
<feature type="intramembrane region" evidence="8">
    <location>
        <begin position="1519"/>
        <end position="1534"/>
    </location>
</feature>
<feature type="topological domain" description="Cytoplasmic" evidence="8">
    <location>
        <begin position="1535"/>
        <end position="2207"/>
    </location>
</feature>
<feature type="domain" description="SF3 helicase" evidence="10">
    <location>
        <begin position="1230"/>
        <end position="1386"/>
    </location>
</feature>
<feature type="domain" description="Peptidase C3" evidence="11">
    <location>
        <begin position="1564"/>
        <end position="1742"/>
    </location>
</feature>
<feature type="domain" description="RdRp catalytic" evidence="9">
    <location>
        <begin position="1973"/>
        <end position="2088"/>
    </location>
</feature>
<feature type="zinc finger region" description="C4-type" evidence="1">
    <location>
        <begin position="1394"/>
        <end position="1411"/>
    </location>
</feature>
<feature type="region of interest" description="Amphipathic alpha-helix" evidence="8">
    <location>
        <begin position="579"/>
        <end position="599"/>
    </location>
</feature>
<feature type="region of interest" description="Disordered" evidence="12">
    <location>
        <begin position="597"/>
        <end position="620"/>
    </location>
</feature>
<feature type="region of interest" description="Disordered" evidence="12">
    <location>
        <begin position="628"/>
        <end position="647"/>
    </location>
</feature>
<feature type="region of interest" description="Oligomerization" evidence="1">
    <location>
        <begin position="1126"/>
        <end position="1264"/>
    </location>
</feature>
<feature type="region of interest" description="Membrane-binding" evidence="1">
    <location>
        <begin position="1126"/>
        <end position="1198"/>
    </location>
</feature>
<feature type="region of interest" description="RNA-binding" evidence="1">
    <location>
        <begin position="1147"/>
        <end position="1151"/>
    </location>
</feature>
<feature type="region of interest" description="RNA-binding" evidence="1">
    <location>
        <begin position="1438"/>
        <end position="1445"/>
    </location>
</feature>
<feature type="region of interest" description="Oligomerization" evidence="1">
    <location>
        <begin position="1449"/>
        <end position="1454"/>
    </location>
</feature>
<feature type="compositionally biased region" description="Polar residues" evidence="12">
    <location>
        <begin position="597"/>
        <end position="613"/>
    </location>
</feature>
<feature type="active site" description="For protease 2A activity" evidence="1">
    <location>
        <position position="899"/>
    </location>
</feature>
<feature type="active site" description="For protease 2A activity" evidence="1">
    <location>
        <position position="917"/>
    </location>
</feature>
<feature type="active site" description="For protease 2A activity" evidence="1">
    <location>
        <position position="988"/>
    </location>
</feature>
<feature type="active site" description="For protease 3C activity" evidence="11">
    <location>
        <position position="1603"/>
    </location>
</feature>
<feature type="active site" description="For protease 3C activity" evidence="11">
    <location>
        <position position="1634"/>
    </location>
</feature>
<feature type="active site" description="For protease 3C activity" evidence="11">
    <location>
        <position position="1710"/>
    </location>
</feature>
<feature type="binding site" evidence="7">
    <location>
        <position position="934"/>
    </location>
    <ligand>
        <name>Zn(2+)</name>
        <dbReference type="ChEBI" id="CHEBI:29105"/>
        <label>1</label>
        <note>structural</note>
    </ligand>
</feature>
<feature type="binding site" evidence="7">
    <location>
        <position position="936"/>
    </location>
    <ligand>
        <name>Zn(2+)</name>
        <dbReference type="ChEBI" id="CHEBI:29105"/>
        <label>1</label>
        <note>structural</note>
    </ligand>
</feature>
<feature type="binding site" evidence="7">
    <location>
        <position position="994"/>
    </location>
    <ligand>
        <name>Zn(2+)</name>
        <dbReference type="ChEBI" id="CHEBI:29105"/>
        <label>1</label>
        <note>structural</note>
    </ligand>
</feature>
<feature type="binding site" evidence="7">
    <location>
        <position position="996"/>
    </location>
    <ligand>
        <name>Zn(2+)</name>
        <dbReference type="ChEBI" id="CHEBI:29105"/>
        <label>1</label>
        <note>structural</note>
    </ligand>
</feature>
<feature type="binding site" evidence="10">
    <location>
        <begin position="1254"/>
        <end position="1261"/>
    </location>
    <ligand>
        <name>ATP</name>
        <dbReference type="ChEBI" id="CHEBI:30616"/>
    </ligand>
</feature>
<feature type="binding site" evidence="1">
    <location>
        <position position="1394"/>
    </location>
    <ligand>
        <name>Zn(2+)</name>
        <dbReference type="ChEBI" id="CHEBI:29105"/>
        <label>2</label>
    </ligand>
</feature>
<feature type="binding site" evidence="1">
    <location>
        <position position="1397"/>
    </location>
    <ligand>
        <name>Zn(2+)</name>
        <dbReference type="ChEBI" id="CHEBI:29105"/>
        <label>2</label>
    </ligand>
</feature>
<feature type="binding site" evidence="1">
    <location>
        <position position="1406"/>
    </location>
    <ligand>
        <name>Zn(2+)</name>
        <dbReference type="ChEBI" id="CHEBI:29105"/>
        <label>2</label>
    </ligand>
</feature>
<feature type="binding site" evidence="1">
    <location>
        <position position="1411"/>
    </location>
    <ligand>
        <name>Zn(2+)</name>
        <dbReference type="ChEBI" id="CHEBI:29105"/>
        <label>2</label>
    </ligand>
</feature>
<feature type="binding site" evidence="1">
    <location>
        <position position="1979"/>
    </location>
    <ligand>
        <name>Mg(2+)</name>
        <dbReference type="ChEBI" id="CHEBI:18420"/>
        <label>1</label>
        <note>catalytic; for RdRp activity</note>
    </ligand>
</feature>
<feature type="binding site" evidence="1">
    <location>
        <position position="1979"/>
    </location>
    <ligand>
        <name>Mg(2+)</name>
        <dbReference type="ChEBI" id="CHEBI:18420"/>
        <label>2</label>
        <note>catalytic; for RdRp activity</note>
    </ligand>
</feature>
<feature type="binding site" evidence="1">
    <location>
        <position position="2074"/>
    </location>
    <ligand>
        <name>Mg(2+)</name>
        <dbReference type="ChEBI" id="CHEBI:18420"/>
        <label>1</label>
        <note>catalytic; for RdRp activity</note>
    </ligand>
</feature>
<feature type="binding site" evidence="1">
    <location>
        <position position="2074"/>
    </location>
    <ligand>
        <name>Mg(2+)</name>
        <dbReference type="ChEBI" id="CHEBI:18420"/>
        <label>2</label>
        <note>catalytic; for RdRp activity</note>
    </ligand>
</feature>
<feature type="site" description="Cleavage; by autolysis" evidence="1">
    <location>
        <begin position="69"/>
        <end position="70"/>
    </location>
</feature>
<feature type="site" description="Cleavage; by protease 3C" evidence="2">
    <location>
        <begin position="340"/>
        <end position="341"/>
    </location>
</feature>
<feature type="site" description="Cleavage; by autolysis" evidence="2">
    <location>
        <begin position="879"/>
        <end position="880"/>
    </location>
</feature>
<feature type="site" description="Cleavage; by protease 3C" evidence="2">
    <location>
        <begin position="1028"/>
        <end position="1029"/>
    </location>
</feature>
<feature type="site" description="Cleavage; by protease 3C" evidence="2">
    <location>
        <begin position="1125"/>
        <end position="1126"/>
    </location>
</feature>
<feature type="site" description="Involved in the interaction with host RTN3" evidence="6">
    <location>
        <position position="1150"/>
    </location>
</feature>
<feature type="site" description="Cleavage; by protease 3C" evidence="2">
    <location>
        <begin position="1454"/>
        <end position="1455"/>
    </location>
</feature>
<feature type="site" description="Cleavage; by protease 3C" evidence="2">
    <location>
        <begin position="1541"/>
        <end position="1542"/>
    </location>
</feature>
<feature type="site" description="Cleavage; by protease 3C" evidence="2">
    <location>
        <begin position="1563"/>
        <end position="1564"/>
    </location>
</feature>
<feature type="site" description="Cleavage; by protease 3C" evidence="2">
    <location>
        <begin position="1746"/>
        <end position="1747"/>
    </location>
</feature>
<feature type="modified residue" description="O-(5'-phospho-RNA)-tyrosine" evidence="1">
    <location>
        <position position="1544"/>
    </location>
</feature>
<feature type="lipid moiety-binding region" description="N-myristoyl glycine; by host" evidence="1">
    <location>
        <position position="2"/>
    </location>
</feature>
<feature type="strand" evidence="14">
    <location>
        <begin position="4"/>
        <end position="7"/>
    </location>
</feature>
<feature type="helix" evidence="14">
    <location>
        <begin position="17"/>
        <end position="19"/>
    </location>
</feature>
<feature type="helix" evidence="14">
    <location>
        <begin position="23"/>
        <end position="25"/>
    </location>
</feature>
<feature type="strand" evidence="14">
    <location>
        <begin position="26"/>
        <end position="29"/>
    </location>
</feature>
<feature type="helix" evidence="14">
    <location>
        <begin position="36"/>
        <end position="38"/>
    </location>
</feature>
<feature type="helix" evidence="14">
    <location>
        <begin position="51"/>
        <end position="54"/>
    </location>
</feature>
<feature type="strand" evidence="14">
    <location>
        <begin position="57"/>
        <end position="59"/>
    </location>
</feature>
<feature type="strand" evidence="14">
    <location>
        <begin position="63"/>
        <end position="65"/>
    </location>
</feature>
<feature type="strand" evidence="14">
    <location>
        <begin position="83"/>
        <end position="87"/>
    </location>
</feature>
<feature type="strand" evidence="14">
    <location>
        <begin position="90"/>
        <end position="96"/>
    </location>
</feature>
<feature type="helix" evidence="14">
    <location>
        <begin position="103"/>
        <end position="105"/>
    </location>
</feature>
<feature type="turn" evidence="14">
    <location>
        <begin position="113"/>
        <end position="115"/>
    </location>
</feature>
<feature type="helix" evidence="14">
    <location>
        <begin position="126"/>
        <end position="128"/>
    </location>
</feature>
<feature type="strand" evidence="14">
    <location>
        <begin position="138"/>
        <end position="140"/>
    </location>
</feature>
<feature type="strand" evidence="14">
    <location>
        <begin position="147"/>
        <end position="151"/>
    </location>
</feature>
<feature type="helix" evidence="14">
    <location>
        <begin position="153"/>
        <end position="155"/>
    </location>
</feature>
<feature type="helix" evidence="14">
    <location>
        <begin position="159"/>
        <end position="167"/>
    </location>
</feature>
<feature type="strand" evidence="14">
    <location>
        <begin position="168"/>
        <end position="180"/>
    </location>
</feature>
<feature type="strand" evidence="14">
    <location>
        <begin position="187"/>
        <end position="197"/>
    </location>
</feature>
<feature type="strand" evidence="14">
    <location>
        <begin position="203"/>
        <end position="207"/>
    </location>
</feature>
<feature type="helix" evidence="14">
    <location>
        <begin position="213"/>
        <end position="216"/>
    </location>
</feature>
<feature type="helix" evidence="14">
    <location>
        <begin position="219"/>
        <end position="221"/>
    </location>
</feature>
<feature type="strand" evidence="14">
    <location>
        <begin position="226"/>
        <end position="228"/>
    </location>
</feature>
<feature type="strand" evidence="14">
    <location>
        <begin position="235"/>
        <end position="237"/>
    </location>
</feature>
<feature type="helix" evidence="14">
    <location>
        <begin position="246"/>
        <end position="248"/>
    </location>
</feature>
<feature type="turn" evidence="14">
    <location>
        <begin position="249"/>
        <end position="252"/>
    </location>
</feature>
<feature type="helix" evidence="14">
    <location>
        <begin position="255"/>
        <end position="260"/>
    </location>
</feature>
<feature type="strand" evidence="14">
    <location>
        <begin position="261"/>
        <end position="267"/>
    </location>
</feature>
<feature type="turn" evidence="14">
    <location>
        <begin position="268"/>
        <end position="270"/>
    </location>
</feature>
<feature type="strand" evidence="14">
    <location>
        <begin position="272"/>
        <end position="278"/>
    </location>
</feature>
<feature type="strand" evidence="14">
    <location>
        <begin position="282"/>
        <end position="287"/>
    </location>
</feature>
<feature type="turn" evidence="14">
    <location>
        <begin position="289"/>
        <end position="291"/>
    </location>
</feature>
<feature type="strand" evidence="14">
    <location>
        <begin position="295"/>
        <end position="307"/>
    </location>
</feature>
<feature type="strand" evidence="14">
    <location>
        <begin position="315"/>
        <end position="331"/>
    </location>
</feature>
<feature type="turn" evidence="14">
    <location>
        <begin position="348"/>
        <end position="351"/>
    </location>
</feature>
<feature type="strand" evidence="14">
    <location>
        <begin position="363"/>
        <end position="365"/>
    </location>
</feature>
<feature type="strand" evidence="14">
    <location>
        <begin position="379"/>
        <end position="382"/>
    </location>
</feature>
<feature type="helix" evidence="14">
    <location>
        <begin position="384"/>
        <end position="387"/>
    </location>
</feature>
<feature type="turn" evidence="14">
    <location>
        <begin position="399"/>
        <end position="403"/>
    </location>
</feature>
<feature type="helix" evidence="14">
    <location>
        <begin position="405"/>
        <end position="408"/>
    </location>
</feature>
<feature type="strand" evidence="14">
    <location>
        <begin position="410"/>
        <end position="413"/>
    </location>
</feature>
<feature type="strand" evidence="14">
    <location>
        <begin position="422"/>
        <end position="427"/>
    </location>
</feature>
<feature type="turn" evidence="14">
    <location>
        <begin position="429"/>
        <end position="431"/>
    </location>
</feature>
<feature type="turn" evidence="14">
    <location>
        <begin position="433"/>
        <end position="437"/>
    </location>
</feature>
<feature type="helix" evidence="14">
    <location>
        <begin position="439"/>
        <end position="444"/>
    </location>
</feature>
<feature type="strand" evidence="14">
    <location>
        <begin position="447"/>
        <end position="452"/>
    </location>
</feature>
<feature type="strand" evidence="14">
    <location>
        <begin position="454"/>
        <end position="460"/>
    </location>
</feature>
<feature type="strand" evidence="14">
    <location>
        <begin position="469"/>
        <end position="475"/>
    </location>
</feature>
<feature type="strand" evidence="14">
    <location>
        <begin position="477"/>
        <end position="479"/>
    </location>
</feature>
<feature type="helix" evidence="14">
    <location>
        <begin position="485"/>
        <end position="488"/>
    </location>
</feature>
<feature type="strand" evidence="14">
    <location>
        <begin position="491"/>
        <end position="497"/>
    </location>
</feature>
<feature type="strand" evidence="14">
    <location>
        <begin position="499"/>
        <end position="501"/>
    </location>
</feature>
<feature type="strand" evidence="14">
    <location>
        <begin position="503"/>
        <end position="508"/>
    </location>
</feature>
<feature type="strand" evidence="14">
    <location>
        <begin position="513"/>
        <end position="520"/>
    </location>
</feature>
<feature type="strand" evidence="14">
    <location>
        <begin position="529"/>
        <end position="536"/>
    </location>
</feature>
<feature type="strand" evidence="14">
    <location>
        <begin position="546"/>
        <end position="556"/>
    </location>
</feature>
<feature type="strand" evidence="14">
    <location>
        <begin position="561"/>
        <end position="565"/>
    </location>
</feature>
<feature type="helix" evidence="14">
    <location>
        <begin position="625"/>
        <end position="627"/>
    </location>
</feature>
<feature type="helix" evidence="14">
    <location>
        <begin position="635"/>
        <end position="637"/>
    </location>
</feature>
<feature type="helix" evidence="14">
    <location>
        <begin position="655"/>
        <end position="659"/>
    </location>
</feature>
<feature type="strand" evidence="14">
    <location>
        <begin position="663"/>
        <end position="671"/>
    </location>
</feature>
<feature type="strand" evidence="14">
    <location>
        <begin position="683"/>
        <end position="687"/>
    </location>
</feature>
<feature type="helix" evidence="14">
    <location>
        <begin position="695"/>
        <end position="700"/>
    </location>
</feature>
<feature type="strand" evidence="14">
    <location>
        <begin position="703"/>
        <end position="725"/>
    </location>
</feature>
<feature type="strand" evidence="14">
    <location>
        <begin position="732"/>
        <end position="738"/>
    </location>
</feature>
<feature type="helix" evidence="14">
    <location>
        <begin position="751"/>
        <end position="754"/>
    </location>
</feature>
<feature type="strand" evidence="14">
    <location>
        <begin position="756"/>
        <end position="758"/>
    </location>
</feature>
<feature type="strand" evidence="14">
    <location>
        <begin position="760"/>
        <end position="764"/>
    </location>
</feature>
<feature type="strand" evidence="14">
    <location>
        <begin position="770"/>
        <end position="774"/>
    </location>
</feature>
<feature type="strand" evidence="14">
    <location>
        <begin position="779"/>
        <end position="785"/>
    </location>
</feature>
<feature type="turn" evidence="14">
    <location>
        <begin position="800"/>
        <end position="803"/>
    </location>
</feature>
<feature type="strand" evidence="14">
    <location>
        <begin position="812"/>
        <end position="815"/>
    </location>
</feature>
<feature type="strand" evidence="14">
    <location>
        <begin position="817"/>
        <end position="822"/>
    </location>
</feature>
<feature type="strand" evidence="14">
    <location>
        <begin position="831"/>
        <end position="849"/>
    </location>
</feature>
<feature type="strand" evidence="14">
    <location>
        <begin position="859"/>
        <end position="862"/>
    </location>
</feature>
<keyword id="KW-0002">3D-structure</keyword>
<keyword id="KW-1072">Activation of host autophagy by virus</keyword>
<keyword id="KW-0067">ATP-binding</keyword>
<keyword id="KW-0068">Autocatalytic cleavage</keyword>
<keyword id="KW-0167">Capsid protein</keyword>
<keyword id="KW-1167">Clathrin- and caveolin-independent endocytosis of virus by host</keyword>
<keyword id="KW-0191">Covalent protein-RNA linkage</keyword>
<keyword id="KW-0235">DNA replication</keyword>
<keyword id="KW-1262">Eukaryotic host gene expression shutoff by virus</keyword>
<keyword id="KW-1191">Eukaryotic host transcription shutoff by virus</keyword>
<keyword id="KW-1193">Eukaryotic host translation shutoff by virus</keyword>
<keyword id="KW-0347">Helicase</keyword>
<keyword id="KW-1035">Host cytoplasm</keyword>
<keyword id="KW-1036">Host cytoplasmic vesicle</keyword>
<keyword id="KW-1190">Host gene expression shutoff by virus</keyword>
<keyword id="KW-1043">Host membrane</keyword>
<keyword id="KW-1192">Host mRNA suppression by virus</keyword>
<keyword id="KW-1048">Host nucleus</keyword>
<keyword id="KW-0945">Host-virus interaction</keyword>
<keyword id="KW-0378">Hydrolase</keyword>
<keyword id="KW-1111">Inhibition of eukaryotic host transcription initiation by virus</keyword>
<keyword id="KW-1090">Inhibition of host innate immune response by virus</keyword>
<keyword id="KW-1097">Inhibition of host MAVS by virus</keyword>
<keyword id="KW-1089">Inhibition of host MDA5 by virus</keyword>
<keyword id="KW-1099">Inhibition of host mRNA nuclear export by virus</keyword>
<keyword id="KW-1088">Inhibition of host RIG-I by virus</keyword>
<keyword id="KW-1113">Inhibition of host RLR pathway by virus</keyword>
<keyword id="KW-0407">Ion channel</keyword>
<keyword id="KW-0406">Ion transport</keyword>
<keyword id="KW-0449">Lipoprotein</keyword>
<keyword id="KW-0460">Magnesium</keyword>
<keyword id="KW-0472">Membrane</keyword>
<keyword id="KW-0479">Metal-binding</keyword>
<keyword id="KW-0519">Myristate</keyword>
<keyword id="KW-0547">Nucleotide-binding</keyword>
<keyword id="KW-0548">Nucleotidyltransferase</keyword>
<keyword id="KW-0597">Phosphoprotein</keyword>
<keyword id="KW-1172">Pore-mediated penetration of viral genome into host cell</keyword>
<keyword id="KW-0645">Protease</keyword>
<keyword id="KW-0677">Repeat</keyword>
<keyword id="KW-0694">RNA-binding</keyword>
<keyword id="KW-0696">RNA-directed RNA polymerase</keyword>
<keyword id="KW-1143">T=pseudo3 icosahedral capsid protein</keyword>
<keyword id="KW-0788">Thiol protease</keyword>
<keyword id="KW-0808">Transferase</keyword>
<keyword id="KW-0813">Transport</keyword>
<keyword id="KW-1161">Viral attachment to host cell</keyword>
<keyword id="KW-0899">Viral immunoevasion</keyword>
<keyword id="KW-1182">Viral ion channel</keyword>
<keyword id="KW-1162">Viral penetration into host cytoplasm</keyword>
<keyword id="KW-0693">Viral RNA replication</keyword>
<keyword id="KW-0946">Virion</keyword>
<keyword id="KW-1164">Virus endocytosis by host</keyword>
<keyword id="KW-1160">Virus entry into host cell</keyword>
<keyword id="KW-0862">Zinc</keyword>
<keyword id="KW-0863">Zinc-finger</keyword>
<comment type="function">
    <molecule>Capsid protein VP1</molecule>
    <text evidence="1">Forms an icosahedral capsid of pseudo T=3 symmetry with capsid proteins VP2 and VP3 (By similarity). The capsid is 300 Angstroms in diameter, composed of 60 copies of each capsid protein and enclosing the viral positive strand RNA genome (By similarity). Capsid protein VP1 mainly forms the vertices of the capsid (By similarity). Capsid protein VP1 interacts with host cell receptor PVR to provide virion attachment to target host cells (By similarity). This attachment induces virion internalization predominantly through clathrin- and caveolin-independent endocytosis in Hela cells and through caveolin-mediated endocytosis in brain microvascular endothelial cells (By similarity). Tyrosine kinases are probably involved in the entry process (By similarity). Virus binding to PVR induces increased junctional permeability and rearrangement of junctional proteins (By similarity). Modulation of endothelial tight junctions, as well as cytolytic infection of endothelial cells themselves, may result in loss of endothelial integrity which may help the virus to reach the CNS (By similarity). After binding to its receptor, the capsid undergoes conformational changes (By similarity). Capsid protein VP1 N-terminus (that contains an amphipathic alpha-helix) and capsid protein VP4 are externalized (By similarity). Together, they shape a pore in the host membrane through which viral genome is translocated to host cell cytoplasm (By similarity).</text>
</comment>
<comment type="function">
    <molecule>Capsid protein VP2</molecule>
    <text evidence="1">Forms an icosahedral capsid of pseudo T=3 symmetry with capsid proteins VP2 and VP3 (By similarity). The capsid is 300 Angstroms in diameter, composed of 60 copies of each capsid protein and enclosing the viral positive strand RNA genome (By similarity).</text>
</comment>
<comment type="function">
    <molecule>Capsid protein VP3</molecule>
    <text evidence="1">Forms an icosahedral capsid of pseudo T=3 symmetry with capsid proteins VP2 and VP3 (By similarity). The capsid is 300 Angstroms in diameter, composed of 60 copies of each capsid protein and enclosing the viral positive strand RNA genome (By similarity).</text>
</comment>
<comment type="function">
    <molecule>Capsid protein VP4</molecule>
    <text evidence="1">Lies on the inner surface of the capsid shell (By similarity). After binding to the host receptor, the capsid undergoes conformational changes (By similarity). Capsid protein VP4 is released, Capsid protein VP1 N-terminus is externalized, and together, they shape a pore in the host membrane through which the viral genome is translocated into the host cell cytoplasm (By similarity).</text>
</comment>
<comment type="function">
    <molecule>Capsid protein VP0</molecule>
    <text evidence="1">Component of immature procapsids, which is cleaved into capsid proteins VP4 and VP2 after maturation (By similarity). Allows the capsid to remain inactive before the maturation step (By similarity).</text>
</comment>
<comment type="function">
    <molecule>Protease 2A</molecule>
    <text evidence="1 2">Cysteine protease that cleaves viral polyprotein and specific host proteins (By similarity). It is responsible for the autocatalytic cleavage between the P1 and P2 regions, which is the first cleavage occurring in the polyprotein (By similarity). Also cleaves the host translation initiation factor EIF4G1, in order to shut down the capped cellular mRNA translation (By similarity). Inhibits the host nucleus-cytoplasm protein and RNA trafficking by cleaving host members of the nuclear pores including NUP98, NUP62 and NUP153 (By similarity). Counteracts stress granule formation probably by antagonizing its assembly or promoting its dissassembly (By similarity). Cleaves and inhibits host IFIH1/MDA5, thereby inhibiting the type-I IFN production and the establishment of the antiviral state (By similarity). Cleaves and inhibits host MAVS, thereby inhibiting the type-I IFN production and the establishment of the antiviral state (By similarity).</text>
</comment>
<comment type="function">
    <molecule>Protein 2B</molecule>
    <text evidence="1">Plays an essential role in the virus replication cycle by acting as a viroporin. Creates a pore in the host endoplasmic reticulum and as a consequence releases Ca2+ in the cytoplasm of infected cell. In turn, high levels of cytoplasmic calcium may trigger membrane trafficking and transport of viral ER-associated proteins to viroplasms, sites of viral genome replication.</text>
</comment>
<comment type="function">
    <molecule>Protein 2C</molecule>
    <text evidence="1">Induces and associates with structural rearrangements of intracellular membranes. Displays RNA-binding, nucleotide binding and NTPase activities. May play a role in virion morphogenesis and viral RNA encapsidation by interacting with the capsid protein VP3.</text>
</comment>
<comment type="function">
    <molecule>Protein 3AB</molecule>
    <text evidence="1">Localizes the viral replication complex to the surface of membranous vesicles. Together with protein 3CD binds the Cis-Active RNA Element (CRE) which is involved in RNA synthesis initiation. Acts as a cofactor to stimulate the activity of 3D polymerase, maybe through a nucleid acid chaperone activity.</text>
</comment>
<comment type="function">
    <molecule>Protein 3A</molecule>
    <text evidence="1">Localizes the viral replication complex to the surface of membranous vesicles (By similarity). It inhibits host cell endoplasmic reticulum-to-Golgi apparatus transport and causes the disassembly of the Golgi complex, possibly through GBF1 interaction (By similarity). This would result in depletion of MHC, trail receptors and IFN receptors at the host cell surface (By similarity). Plays an essential role in viral RNA replication by recruiting ACBD3 and PI4KB at the viral replication sites, thereby allowing the formation of the rearranged membranous structures where viral replication takes place (By similarity).</text>
</comment>
<comment type="function">
    <molecule>Viral protein genome-linked</molecule>
    <text evidence="1">Acts as a primer for viral RNA replication and remains covalently bound to viral genomic RNA. VPg is uridylylated prior to priming replication into VPg-pUpU. The oriI viral genomic sequence may act as a template for this. The VPg-pUpU is then used as primer on the genomic RNA poly(A) by the RNA-dependent RNA polymerase to replicate the viral genome. During genome replication, the VPg-RNA linkage is removed by the host TDP2, thereby accelerating replication. During the late stage of the replication cycle, host TDP2 is excluded from sites of viral RNA synthesis and encapsidation, allowing for the generation of progeny virions.</text>
</comment>
<comment type="function">
    <molecule>Protein 3CD</molecule>
    <text evidence="1">Involved in the viral replication complex and viral polypeptide maturation. It exhibits protease activity with a specificity and catalytic efficiency that is different from protease 3C. Protein 3CD lacks polymerase activity. Protein 3CD binds to the 5'UTR of the viral genome.</text>
</comment>
<comment type="function">
    <molecule>Protease 3C</molecule>
    <text evidence="1 3">Major viral protease that mediates proteolytic processing of the polyprotein (By similarity). Cleaves host EIF5B, contributing to host translation shutoff (By similarity). Also cleaves host PABPC1, contributing to host translation shutoff (By similarity). Cleaves host RIGI and thus contributes to the inhibition of type I interferon production (By similarity). Cleaves host NLRP1, triggers host N-glycine-mediated degradation of the autoinhibitory NLRP1 N-terminal fragment (By similarity). Inhibits the integrated stress response (ISR) in the infected cell by cleaving host G3BP1 (By similarity). Stress granule formation is thus inhibited, which allows protein synthesis and viral replication (By similarity).</text>
</comment>
<comment type="function">
    <molecule>RNA-directed RNA polymerase</molecule>
    <text evidence="1">Replicates the viral genomic RNA on the surface of intracellular membranes. May form linear arrays of subunits that propagate along a strong head-to-tail interaction called interface-I. Covalently attaches UMP to a tyrosine of VPg, which is used to prime RNA synthesis. The positive stranded RNA genome is first replicated at virus induced membranous vesicles, creating a dsRNA genomic replication form. This dsRNA is then used as template to synthesize positive stranded RNA genomes. ss(+)RNA genomes are either translated, replicated or encapsidated.</text>
</comment>
<comment type="catalytic activity">
    <molecule>Protein 2C</molecule>
    <reaction evidence="1">
        <text>a ribonucleoside 5'-triphosphate + H2O = a ribonucleoside 5'-diphosphate + phosphate + H(+)</text>
        <dbReference type="Rhea" id="RHEA:23680"/>
        <dbReference type="ChEBI" id="CHEBI:15377"/>
        <dbReference type="ChEBI" id="CHEBI:15378"/>
        <dbReference type="ChEBI" id="CHEBI:43474"/>
        <dbReference type="ChEBI" id="CHEBI:57930"/>
        <dbReference type="ChEBI" id="CHEBI:61557"/>
        <dbReference type="EC" id="3.6.1.15"/>
    </reaction>
</comment>
<comment type="catalytic activity">
    <molecule>Protease 2A</molecule>
    <reaction evidence="1">
        <text>Selective cleavage of Tyr-|-Gly bond in the picornavirus polyprotein.</text>
        <dbReference type="EC" id="3.4.22.29"/>
    </reaction>
</comment>
<comment type="catalytic activity">
    <molecule>RNA-directed RNA polymerase</molecule>
    <reaction evidence="9">
        <text>RNA(n) + a ribonucleoside 5'-triphosphate = RNA(n+1) + diphosphate</text>
        <dbReference type="Rhea" id="RHEA:21248"/>
        <dbReference type="Rhea" id="RHEA-COMP:14527"/>
        <dbReference type="Rhea" id="RHEA-COMP:17342"/>
        <dbReference type="ChEBI" id="CHEBI:33019"/>
        <dbReference type="ChEBI" id="CHEBI:61557"/>
        <dbReference type="ChEBI" id="CHEBI:140395"/>
        <dbReference type="EC" id="2.7.7.48"/>
    </reaction>
</comment>
<comment type="catalytic activity">
    <molecule>Protease 3C</molecule>
    <reaction evidence="11">
        <text>Selective cleavage of Gln-|-Gly bond in the poliovirus polyprotein. In other picornavirus reactions Glu may be substituted for Gln, and Ser or Thr for Gly.</text>
        <dbReference type="EC" id="3.4.22.28"/>
    </reaction>
</comment>
<comment type="cofactor">
    <molecule>RNA-directed RNA polymerase</molecule>
    <cofactor evidence="1">
        <name>Mg(2+)</name>
        <dbReference type="ChEBI" id="CHEBI:18420"/>
    </cofactor>
    <text evidence="1 4">Binds 2 magnesium ions that constitute a dinuclear catalytic metal center (By similarity). The magnesium ions are not prebound but only present for catalysis (By similarity). Requires the presence of 3CDpro or 3CPro (By similarity).</text>
</comment>
<comment type="activity regulation">
    <molecule>RNA-directed RNA polymerase</molecule>
    <text evidence="1">Replication or transcription is subject to high level of random mutations by the nucleotide analog ribavirin.</text>
</comment>
<comment type="subunit">
    <molecule>Capsid protein VP0</molecule>
    <text evidence="1">Interacts with capsid protein VP1 and capsid protein VP3 to form heterotrimeric protomers.</text>
</comment>
<comment type="subunit">
    <molecule>Capsid protein VP1</molecule>
    <text evidence="1">Interacts with capsid protein VP0, and capsid protein VP3 to form heterotrimeric protomers (By similarity). Interacts with human PVR (By similarity). Five protomers subsequently associate to form pentamers which serve as building blocks for the capsid (By similarity). Interacts with capsid protein VP2, capsid protein VP3 and capsid protein VP4 following cleavage of capsid protein VP0 (By similarity).</text>
</comment>
<comment type="subunit">
    <molecule>Capsid protein VP2</molecule>
    <text evidence="1">Interacts with capsid protein VP1 and capsid protein VP3 in the mature capsid.</text>
</comment>
<comment type="subunit">
    <molecule>Capsid protein VP3</molecule>
    <text evidence="1">Interacts with capsid protein VP0 and capsid protein VP1 to form heterotrimeric protomers (By similarity). Five protomers subsequently associate to form pentamers which serve as building blocks for the capsid (By similarity). Interacts with capsid protein VP4 in the mature capsid (By similarity). Interacts with protein 2C; this interaction may be important for virion morphogenesis (By similarity).</text>
</comment>
<comment type="subunit">
    <molecule>Capsid protein VP4</molecule>
    <text evidence="1">Interacts with capsid protein VP1 and capsid protein VP3.</text>
</comment>
<comment type="subunit">
    <molecule>Protease 2A</molecule>
    <text evidence="5">Homodimer.</text>
</comment>
<comment type="subunit">
    <molecule>Protein 2C</molecule>
    <text evidence="1">Homohexamer; forms a hexameric ring structure with 6-fold symmetry characteristic of AAA+ ATPases (By similarity). Interacts (via N-terminus) with host RTN3 (via reticulon domain); this interaction is important for viral replication (By similarity). Interacts with capsid protein VP3; this interaction may be important for virion morphogenesis (By similarity).</text>
</comment>
<comment type="subunit">
    <molecule>Protein 3AB</molecule>
    <text evidence="1">Interacts with protein 3CD.</text>
</comment>
<comment type="subunit">
    <molecule>Protein 3A</molecule>
    <text evidence="1">Homodimer (By similarity). Interacts with host GBF1 (By similarity). Interacts (via GOLD domain) with host ACBD3 (via GOLD domain); this interaction allows the formation of a viral protein 3A/ACBD3 heterotetramer with a 2:2 stoichiometry, which will stimulate the recruitment of host PI4KB in order to synthesize PI4P at the viral RNA replication sites (By similarity).</text>
</comment>
<comment type="subunit">
    <molecule>Viral protein genome-linked</molecule>
    <text evidence="1">Interacts with RNA-directed RNA polymerase.</text>
</comment>
<comment type="subunit">
    <molecule>Protein 3CD</molecule>
    <text evidence="1">Interacts with protein 3AB and with RNA-directed RNA polymerase.</text>
</comment>
<comment type="subunit">
    <molecule>RNA-directed RNA polymerase</molecule>
    <text evidence="1">Interacts with Viral protein genome-linked and with protein 3CD.</text>
</comment>
<comment type="subcellular location">
    <molecule>Capsid protein VP0</molecule>
    <subcellularLocation>
        <location>Virion</location>
    </subcellularLocation>
    <subcellularLocation>
        <location evidence="13">Host cytoplasm</location>
    </subcellularLocation>
</comment>
<comment type="subcellular location">
    <molecule>Capsid protein VP4</molecule>
    <subcellularLocation>
        <location>Virion</location>
    </subcellularLocation>
</comment>
<comment type="subcellular location">
    <molecule>Capsid protein VP2</molecule>
    <subcellularLocation>
        <location evidence="1">Virion</location>
    </subcellularLocation>
    <subcellularLocation>
        <location evidence="13">Host cytoplasm</location>
    </subcellularLocation>
</comment>
<comment type="subcellular location">
    <molecule>Capsid protein VP3</molecule>
    <subcellularLocation>
        <location evidence="1">Virion</location>
    </subcellularLocation>
    <subcellularLocation>
        <location evidence="13">Host cytoplasm</location>
    </subcellularLocation>
</comment>
<comment type="subcellular location">
    <molecule>Capsid protein VP1</molecule>
    <subcellularLocation>
        <location evidence="1">Virion</location>
    </subcellularLocation>
    <subcellularLocation>
        <location evidence="13">Host cytoplasm</location>
    </subcellularLocation>
</comment>
<comment type="subcellular location">
    <molecule>Protein 2B</molecule>
    <subcellularLocation>
        <location evidence="13">Host cytoplasmic vesicle membrane</location>
        <topology evidence="13">Peripheral membrane protein</topology>
        <orientation evidence="13">Cytoplasmic side</orientation>
    </subcellularLocation>
    <text>Probably localizes to the surface of intracellular membrane vesicles that are induced after virus infection as the site for viral RNA replication. These vesicles are derived from the endoplasmic reticulum.</text>
</comment>
<comment type="subcellular location">
    <molecule>Protein 2C</molecule>
    <subcellularLocation>
        <location evidence="13">Host cytoplasmic vesicle membrane</location>
        <topology evidence="13">Peripheral membrane protein</topology>
        <orientation evidence="13">Cytoplasmic side</orientation>
    </subcellularLocation>
    <text>Probably localizes to the surface of intracellular membrane vesicles that are induced after virus infection as the site for viral RNA replication. These vesicles are derived from the endoplasmic reticulum.</text>
</comment>
<comment type="subcellular location">
    <molecule>Protein 3A</molecule>
    <subcellularLocation>
        <location evidence="13">Host cytoplasmic vesicle membrane</location>
        <topology evidence="13">Peripheral membrane protein</topology>
        <orientation evidence="13">Cytoplasmic side</orientation>
    </subcellularLocation>
    <text>Probably localizes to the surface of intracellular membrane vesicles that are induced after virus infection as the site for viral RNA replication. These vesicles are derived from the endoplasmic reticulum.</text>
</comment>
<comment type="subcellular location">
    <molecule>Protein 3AB</molecule>
    <subcellularLocation>
        <location evidence="13">Host cytoplasmic vesicle membrane</location>
        <topology evidence="13">Peripheral membrane protein</topology>
        <orientation evidence="13">Cytoplasmic side</orientation>
    </subcellularLocation>
    <text>Probably localizes to the surface of intracellular membrane vesicles that are induced after virus infection as the site for viral RNA replication. These vesicles are derived from the endoplasmic reticulum.</text>
</comment>
<comment type="subcellular location">
    <molecule>Viral protein genome-linked</molecule>
    <subcellularLocation>
        <location evidence="1">Virion</location>
    </subcellularLocation>
    <subcellularLocation>
        <location evidence="6">Host cytoplasm</location>
    </subcellularLocation>
</comment>
<comment type="subcellular location">
    <molecule>Protease 3C</molecule>
    <subcellularLocation>
        <location>Host cytoplasm</location>
    </subcellularLocation>
</comment>
<comment type="subcellular location">
    <molecule>Protein 3CD</molecule>
    <subcellularLocation>
        <location evidence="1">Host nucleus</location>
    </subcellularLocation>
    <subcellularLocation>
        <location evidence="1">Host cytoplasm</location>
    </subcellularLocation>
    <subcellularLocation>
        <location evidence="13">Host cytoplasmic vesicle membrane</location>
        <topology evidence="13">Peripheral membrane protein</topology>
        <orientation evidence="13">Cytoplasmic side</orientation>
    </subcellularLocation>
    <text>Probably localizes to the surface of intracellular membrane vesicles that are induced after virus infection as the site for viral RNA replication. These vesicles are derived from the endoplasmic reticulum.</text>
</comment>
<comment type="subcellular location">
    <molecule>RNA-directed RNA polymerase</molecule>
    <subcellularLocation>
        <location evidence="13">Host cytoplasmic vesicle membrane</location>
        <topology evidence="13">Peripheral membrane protein</topology>
        <orientation evidence="13">Cytoplasmic side</orientation>
    </subcellularLocation>
    <text>Probably localizes to the surface of intracellular membrane vesicles that are induced after virus infection as the site for viral RNA replication. These vesicles are derived from the endoplasmic reticulum.</text>
</comment>
<comment type="domain">
    <molecule>Protein 2C</molecule>
    <text evidence="1">The N-terminus has membrane-binding (By similarity). The N-terminus also displays RNA-binding properties (By similarity). The N-terminus is involved in oligomerization (By similarity). The central part contains an ATPase domain and a C4-type zinc-finger (By similarity). The C-terminus is involved in RNA-binding (By similarity). The extreme C-terminus contains a region involved in oligomerization (By similarity).</text>
</comment>
<comment type="PTM">
    <molecule>Genome polyprotein</molecule>
    <text evidence="1">Specific enzymatic cleavages in vivo by the viral proteases yield processing intermediates and the mature proteins.</text>
</comment>
<comment type="PTM">
    <molecule>Capsid protein VP0</molecule>
    <text evidence="1">Myristoylation is required for the formation of pentamers during virus assembly. Further assembly of 12 pentamers and a molecule of genomic RNA generates the provirion.</text>
</comment>
<comment type="PTM">
    <molecule>Capsid protein VP0</molecule>
    <text evidence="1">During virion maturation, immature virions are rendered infectious following cleavage of VP0 into VP4 and VP2. This maturation seems to be an autocatalytic event triggered by the presence of RNA in the capsid and it is followed by a conformational change infectious virion.</text>
</comment>
<comment type="PTM">
    <molecule>Capsid protein VP4</molecule>
    <text evidence="1">Myristoylation is required during RNA encapsidation and formation of the mature virus particle.</text>
</comment>
<comment type="PTM">
    <molecule>Viral protein genome-linked</molecule>
    <text evidence="1">VPg is uridylylated by the polymerase into VPg-pUpU. This acts as a nucleotide-peptide primer for the genomic RNA replication.</text>
</comment>
<comment type="similarity">
    <text evidence="13">Belongs to the picornaviruses polyprotein family.</text>
</comment>
<comment type="online information" name="Virus Particle ExploreR db">
    <link uri="https://viperdb.org/Info_Page.php?VDB=1eah"/>
    <text>Icosahedral capsid structure</text>
</comment>
<reference key="1">
    <citation type="journal article" date="1986" name="J. Virol.">
        <title>Mapping of sequences required for mouse neurovirulence of poliovirus type 2 Lansing.</title>
        <authorList>
            <person name="la Monica N."/>
            <person name="Meriam C."/>
            <person name="Racaniello V.R."/>
        </authorList>
    </citation>
    <scope>NUCLEOTIDE SEQUENCE [GENOMIC RNA]</scope>
</reference>
<organismHost>
    <name type="scientific">Homo sapiens</name>
    <name type="common">Human</name>
    <dbReference type="NCBI Taxonomy" id="9606"/>
</organismHost>
<evidence type="ECO:0000250" key="1">
    <source>
        <dbReference type="UniProtKB" id="P03300"/>
    </source>
</evidence>
<evidence type="ECO:0000250" key="2">
    <source>
        <dbReference type="UniProtKB" id="P03301"/>
    </source>
</evidence>
<evidence type="ECO:0000250" key="3">
    <source>
        <dbReference type="UniProtKB" id="P03303"/>
    </source>
</evidence>
<evidence type="ECO:0000250" key="4">
    <source>
        <dbReference type="UniProtKB" id="P03313"/>
    </source>
</evidence>
<evidence type="ECO:0000250" key="5">
    <source>
        <dbReference type="UniProtKB" id="P04936"/>
    </source>
</evidence>
<evidence type="ECO:0000250" key="6">
    <source>
        <dbReference type="UniProtKB" id="Q66478"/>
    </source>
</evidence>
<evidence type="ECO:0000250" key="7">
    <source>
        <dbReference type="UniProtKB" id="Q9QF31"/>
    </source>
</evidence>
<evidence type="ECO:0000255" key="8"/>
<evidence type="ECO:0000255" key="9">
    <source>
        <dbReference type="PROSITE-ProRule" id="PRU00539"/>
    </source>
</evidence>
<evidence type="ECO:0000255" key="10">
    <source>
        <dbReference type="PROSITE-ProRule" id="PRU00551"/>
    </source>
</evidence>
<evidence type="ECO:0000255" key="11">
    <source>
        <dbReference type="PROSITE-ProRule" id="PRU01222"/>
    </source>
</evidence>
<evidence type="ECO:0000256" key="12">
    <source>
        <dbReference type="SAM" id="MobiDB-lite"/>
    </source>
</evidence>
<evidence type="ECO:0000305" key="13"/>
<evidence type="ECO:0007829" key="14">
    <source>
        <dbReference type="PDB" id="1EAH"/>
    </source>
</evidence>
<protein>
    <recommendedName>
        <fullName>Genome polyprotein</fullName>
    </recommendedName>
    <component>
        <recommendedName>
            <fullName>P1</fullName>
        </recommendedName>
    </component>
    <component>
        <recommendedName>
            <fullName>Capsid protein VP0</fullName>
        </recommendedName>
        <alternativeName>
            <fullName>VP4-VP2</fullName>
        </alternativeName>
    </component>
    <component>
        <recommendedName>
            <fullName>Capsid protein VP4</fullName>
        </recommendedName>
        <alternativeName>
            <fullName>P1A</fullName>
        </alternativeName>
        <alternativeName>
            <fullName>Virion protein 4</fullName>
        </alternativeName>
    </component>
    <component>
        <recommendedName>
            <fullName>Capsid protein VP2</fullName>
        </recommendedName>
        <alternativeName>
            <fullName>P1B</fullName>
        </alternativeName>
        <alternativeName>
            <fullName>Virion protein 2</fullName>
        </alternativeName>
    </component>
    <component>
        <recommendedName>
            <fullName>Capsid protein VP3</fullName>
        </recommendedName>
        <alternativeName>
            <fullName>P1C</fullName>
        </alternativeName>
        <alternativeName>
            <fullName>Virion protein 3</fullName>
        </alternativeName>
    </component>
    <component>
        <recommendedName>
            <fullName>Capsid protein VP1</fullName>
        </recommendedName>
        <alternativeName>
            <fullName>P1D</fullName>
        </alternativeName>
        <alternativeName>
            <fullName>Virion protein 1</fullName>
        </alternativeName>
    </component>
    <component>
        <recommendedName>
            <fullName>P2</fullName>
        </recommendedName>
    </component>
    <component>
        <recommendedName>
            <fullName>Protease 2A</fullName>
            <shortName>P2A</shortName>
            <ecNumber evidence="1">3.4.22.29</ecNumber>
        </recommendedName>
        <alternativeName>
            <fullName>Picornain 2A</fullName>
        </alternativeName>
        <alternativeName>
            <fullName>Protein 2A</fullName>
        </alternativeName>
    </component>
    <component>
        <recommendedName>
            <fullName>Protein 2B</fullName>
            <shortName>P2B</shortName>
        </recommendedName>
    </component>
    <component>
        <recommendedName>
            <fullName>Protein 2C</fullName>
            <shortName>P2C</shortName>
            <ecNumber evidence="1">3.6.1.15</ecNumber>
        </recommendedName>
    </component>
    <component>
        <recommendedName>
            <fullName>P3</fullName>
        </recommendedName>
    </component>
    <component>
        <recommendedName>
            <fullName>Protein 3AB</fullName>
        </recommendedName>
    </component>
    <component>
        <recommendedName>
            <fullName>Protein 3A</fullName>
            <shortName>P3A</shortName>
        </recommendedName>
    </component>
    <component>
        <recommendedName>
            <fullName>Viral protein genome-linked</fullName>
            <shortName>VPg</shortName>
        </recommendedName>
        <alternativeName>
            <fullName>Protein 3B</fullName>
            <shortName>P3B</shortName>
        </alternativeName>
    </component>
    <component>
        <recommendedName>
            <fullName>Protein 3CD</fullName>
            <ecNumber>3.4.22.28</ecNumber>
        </recommendedName>
    </component>
    <component>
        <recommendedName>
            <fullName evidence="11">Protease 3C</fullName>
            <ecNumber evidence="11">3.4.22.28</ecNumber>
        </recommendedName>
        <alternativeName>
            <fullName evidence="11">Picornain 3C</fullName>
            <shortName evidence="11">P3C</shortName>
        </alternativeName>
    </component>
    <component>
        <recommendedName>
            <fullName evidence="9">RNA-directed RNA polymerase</fullName>
            <shortName>RdRp</shortName>
            <ecNumber evidence="9">2.7.7.48</ecNumber>
        </recommendedName>
        <alternativeName>
            <fullName>3D polymerase</fullName>
            <shortName>3Dpol</shortName>
        </alternativeName>
        <alternativeName>
            <fullName>Protein 3D</fullName>
            <shortName>3D</shortName>
        </alternativeName>
    </component>
</protein>
<dbReference type="EC" id="3.4.22.29" evidence="1"/>
<dbReference type="EC" id="3.6.1.15" evidence="1"/>
<dbReference type="EC" id="3.4.22.28" evidence="11"/>
<dbReference type="EC" id="2.7.7.48" evidence="9"/>
<dbReference type="EMBL" id="M12197">
    <property type="protein sequence ID" value="AAA46912.1"/>
    <property type="molecule type" value="Genomic_RNA"/>
</dbReference>
<dbReference type="PIR" id="A29507">
    <property type="entry name" value="GNNY5P"/>
</dbReference>
<dbReference type="PDB" id="1EAH">
    <property type="method" value="X-ray"/>
    <property type="resolution" value="2.90 A"/>
    <property type="chains" value="1=579-879, 2=70-340, 3=341-578, 4=2-69"/>
</dbReference>
<dbReference type="PDB" id="3EPF">
    <property type="method" value="EM"/>
    <property type="resolution" value="9.00 A"/>
    <property type="chains" value="1=602-879, 2=79-340, 3=341-575, 4=2-69"/>
</dbReference>
<dbReference type="PDBsum" id="1EAH"/>
<dbReference type="PDBsum" id="3EPF"/>
<dbReference type="EMDB" id="EMD-15727"/>
<dbReference type="EMDB" id="EMD-50189"/>
<dbReference type="EMDB" id="EMD-50199"/>
<dbReference type="SMR" id="P06210"/>
<dbReference type="IntAct" id="P06210">
    <property type="interactions" value="1"/>
</dbReference>
<dbReference type="DrugBank" id="DB08231">
    <property type="generic name" value="Myristic acid"/>
</dbReference>
<dbReference type="MEROPS" id="C03.020"/>
<dbReference type="EvolutionaryTrace" id="P06210"/>
<dbReference type="Proteomes" id="UP000007638">
    <property type="component" value="Segment"/>
</dbReference>
<dbReference type="GO" id="GO:0044162">
    <property type="term" value="C:host cell cytoplasmic vesicle membrane"/>
    <property type="evidence" value="ECO:0007669"/>
    <property type="project" value="UniProtKB-SubCell"/>
</dbReference>
<dbReference type="GO" id="GO:0042025">
    <property type="term" value="C:host cell nucleus"/>
    <property type="evidence" value="ECO:0007669"/>
    <property type="project" value="UniProtKB-SubCell"/>
</dbReference>
<dbReference type="GO" id="GO:0016020">
    <property type="term" value="C:membrane"/>
    <property type="evidence" value="ECO:0007669"/>
    <property type="project" value="UniProtKB-KW"/>
</dbReference>
<dbReference type="GO" id="GO:0039618">
    <property type="term" value="C:T=pseudo3 icosahedral viral capsid"/>
    <property type="evidence" value="ECO:0007669"/>
    <property type="project" value="UniProtKB-KW"/>
</dbReference>
<dbReference type="GO" id="GO:0005524">
    <property type="term" value="F:ATP binding"/>
    <property type="evidence" value="ECO:0007669"/>
    <property type="project" value="UniProtKB-KW"/>
</dbReference>
<dbReference type="GO" id="GO:0015267">
    <property type="term" value="F:channel activity"/>
    <property type="evidence" value="ECO:0007669"/>
    <property type="project" value="UniProtKB-KW"/>
</dbReference>
<dbReference type="GO" id="GO:0004197">
    <property type="term" value="F:cysteine-type endopeptidase activity"/>
    <property type="evidence" value="ECO:0007669"/>
    <property type="project" value="UniProtKB-EC"/>
</dbReference>
<dbReference type="GO" id="GO:0017111">
    <property type="term" value="F:ribonucleoside triphosphate phosphatase activity"/>
    <property type="evidence" value="ECO:0007669"/>
    <property type="project" value="UniProtKB-EC"/>
</dbReference>
<dbReference type="GO" id="GO:0003723">
    <property type="term" value="F:RNA binding"/>
    <property type="evidence" value="ECO:0007669"/>
    <property type="project" value="UniProtKB-KW"/>
</dbReference>
<dbReference type="GO" id="GO:0003724">
    <property type="term" value="F:RNA helicase activity"/>
    <property type="evidence" value="ECO:0007669"/>
    <property type="project" value="InterPro"/>
</dbReference>
<dbReference type="GO" id="GO:0003968">
    <property type="term" value="F:RNA-directed RNA polymerase activity"/>
    <property type="evidence" value="ECO:0007669"/>
    <property type="project" value="UniProtKB-KW"/>
</dbReference>
<dbReference type="GO" id="GO:0005198">
    <property type="term" value="F:structural molecule activity"/>
    <property type="evidence" value="ECO:0007669"/>
    <property type="project" value="InterPro"/>
</dbReference>
<dbReference type="GO" id="GO:0008270">
    <property type="term" value="F:zinc ion binding"/>
    <property type="evidence" value="ECO:0007669"/>
    <property type="project" value="UniProtKB-KW"/>
</dbReference>
<dbReference type="GO" id="GO:0006260">
    <property type="term" value="P:DNA replication"/>
    <property type="evidence" value="ECO:0007669"/>
    <property type="project" value="UniProtKB-KW"/>
</dbReference>
<dbReference type="GO" id="GO:0006351">
    <property type="term" value="P:DNA-templated transcription"/>
    <property type="evidence" value="ECO:0007669"/>
    <property type="project" value="InterPro"/>
</dbReference>
<dbReference type="GO" id="GO:0034220">
    <property type="term" value="P:monoatomic ion transmembrane transport"/>
    <property type="evidence" value="ECO:0007669"/>
    <property type="project" value="UniProtKB-KW"/>
</dbReference>
<dbReference type="GO" id="GO:0006508">
    <property type="term" value="P:proteolysis"/>
    <property type="evidence" value="ECO:0007669"/>
    <property type="project" value="UniProtKB-KW"/>
</dbReference>
<dbReference type="GO" id="GO:0019065">
    <property type="term" value="P:receptor-mediated endocytosis of virus by host cell"/>
    <property type="evidence" value="ECO:0007669"/>
    <property type="project" value="UniProtKB-KW"/>
</dbReference>
<dbReference type="GO" id="GO:0044694">
    <property type="term" value="P:symbiont genome entry into host cell via pore formation in plasma membrane"/>
    <property type="evidence" value="ECO:0007669"/>
    <property type="project" value="UniProtKB-KW"/>
</dbReference>
<dbReference type="GO" id="GO:0039520">
    <property type="term" value="P:symbiont-mediated activation of host autophagy"/>
    <property type="evidence" value="ECO:0000250"/>
    <property type="project" value="UniProtKB"/>
</dbReference>
<dbReference type="GO" id="GO:0039545">
    <property type="term" value="P:symbiont-mediated suppression of host cytoplasmic pattern recognition receptor signaling pathway via inhibition of MAVS activity"/>
    <property type="evidence" value="ECO:0007669"/>
    <property type="project" value="UniProtKB-KW"/>
</dbReference>
<dbReference type="GO" id="GO:0039554">
    <property type="term" value="P:symbiont-mediated suppression of host cytoplasmic pattern recognition receptor signaling pathway via inhibition of MDA-5 activity"/>
    <property type="evidence" value="ECO:0007669"/>
    <property type="project" value="UniProtKB-KW"/>
</dbReference>
<dbReference type="GO" id="GO:0039540">
    <property type="term" value="P:symbiont-mediated suppression of host cytoplasmic pattern recognition receptor signaling pathway via inhibition of RIG-I activity"/>
    <property type="evidence" value="ECO:0007669"/>
    <property type="project" value="UniProtKB-KW"/>
</dbReference>
<dbReference type="GO" id="GO:0039522">
    <property type="term" value="P:symbiont-mediated suppression of host mRNA export from nucleus"/>
    <property type="evidence" value="ECO:0007669"/>
    <property type="project" value="UniProtKB-KW"/>
</dbReference>
<dbReference type="GO" id="GO:0039694">
    <property type="term" value="P:viral RNA genome replication"/>
    <property type="evidence" value="ECO:0007669"/>
    <property type="project" value="InterPro"/>
</dbReference>
<dbReference type="GO" id="GO:0019062">
    <property type="term" value="P:virion attachment to host cell"/>
    <property type="evidence" value="ECO:0007669"/>
    <property type="project" value="UniProtKB-KW"/>
</dbReference>
<dbReference type="CDD" id="cd23213">
    <property type="entry name" value="Enterovirus_RdRp"/>
    <property type="match status" value="1"/>
</dbReference>
<dbReference type="CDD" id="cd00205">
    <property type="entry name" value="rhv_like"/>
    <property type="match status" value="3"/>
</dbReference>
<dbReference type="FunFam" id="1.20.960.20:FF:000001">
    <property type="entry name" value="Genome polyprotein"/>
    <property type="match status" value="1"/>
</dbReference>
<dbReference type="FunFam" id="2.40.10.10:FF:000018">
    <property type="entry name" value="Genome polyprotein"/>
    <property type="match status" value="1"/>
</dbReference>
<dbReference type="FunFam" id="2.40.10.10:FF:000020">
    <property type="entry name" value="Genome polyprotein"/>
    <property type="match status" value="1"/>
</dbReference>
<dbReference type="FunFam" id="2.40.10.10:FF:000022">
    <property type="entry name" value="Genome polyprotein"/>
    <property type="match status" value="1"/>
</dbReference>
<dbReference type="FunFam" id="2.60.120.20:FF:000001">
    <property type="entry name" value="Genome polyprotein"/>
    <property type="match status" value="1"/>
</dbReference>
<dbReference type="FunFam" id="2.60.120.20:FF:000002">
    <property type="entry name" value="Genome polyprotein"/>
    <property type="match status" value="1"/>
</dbReference>
<dbReference type="FunFam" id="2.60.120.20:FF:000003">
    <property type="entry name" value="Genome polyprotein"/>
    <property type="match status" value="1"/>
</dbReference>
<dbReference type="FunFam" id="3.30.70.270:FF:000008">
    <property type="entry name" value="Genome polyprotein"/>
    <property type="match status" value="1"/>
</dbReference>
<dbReference type="FunFam" id="4.10.880.10:FF:000001">
    <property type="entry name" value="Genome polyprotein"/>
    <property type="match status" value="1"/>
</dbReference>
<dbReference type="FunFam" id="4.10.880.10:FF:000002">
    <property type="entry name" value="Genome polyprotein"/>
    <property type="match status" value="1"/>
</dbReference>
<dbReference type="Gene3D" id="1.20.960.20">
    <property type="match status" value="1"/>
</dbReference>
<dbReference type="Gene3D" id="2.60.120.20">
    <property type="match status" value="3"/>
</dbReference>
<dbReference type="Gene3D" id="3.30.70.270">
    <property type="match status" value="1"/>
</dbReference>
<dbReference type="Gene3D" id="6.10.20.20">
    <property type="entry name" value="Poliovirus 3A protein-like"/>
    <property type="match status" value="1"/>
</dbReference>
<dbReference type="Gene3D" id="4.10.880.10">
    <property type="entry name" value="Poliovirus 3D polymerase Domain 1 (Nucleotidyltransferase)"/>
    <property type="match status" value="2"/>
</dbReference>
<dbReference type="Gene3D" id="2.40.10.10">
    <property type="entry name" value="Trypsin-like serine proteases"/>
    <property type="match status" value="4"/>
</dbReference>
<dbReference type="InterPro" id="IPR043502">
    <property type="entry name" value="DNA/RNA_pol_sf"/>
</dbReference>
<dbReference type="InterPro" id="IPR000605">
    <property type="entry name" value="Helicase_SF3_ssDNA/RNA_vir"/>
</dbReference>
<dbReference type="InterPro" id="IPR014759">
    <property type="entry name" value="Helicase_SF3_ssRNA_vir"/>
</dbReference>
<dbReference type="InterPro" id="IPR027417">
    <property type="entry name" value="P-loop_NTPase"/>
</dbReference>
<dbReference type="InterPro" id="IPR014838">
    <property type="entry name" value="P3A"/>
</dbReference>
<dbReference type="InterPro" id="IPR036203">
    <property type="entry name" value="P3A_soluble_dom"/>
</dbReference>
<dbReference type="InterPro" id="IPR044067">
    <property type="entry name" value="PCV_3C_PRO"/>
</dbReference>
<dbReference type="InterPro" id="IPR000081">
    <property type="entry name" value="Peptidase_C3"/>
</dbReference>
<dbReference type="InterPro" id="IPR000199">
    <property type="entry name" value="Peptidase_C3A/C3B_picornavir"/>
</dbReference>
<dbReference type="InterPro" id="IPR009003">
    <property type="entry name" value="Peptidase_S1_PA"/>
</dbReference>
<dbReference type="InterPro" id="IPR043504">
    <property type="entry name" value="Peptidase_S1_PA_chymotrypsin"/>
</dbReference>
<dbReference type="InterPro" id="IPR003138">
    <property type="entry name" value="Pico_P1A"/>
</dbReference>
<dbReference type="InterPro" id="IPR002527">
    <property type="entry name" value="Pico_P2B"/>
</dbReference>
<dbReference type="InterPro" id="IPR001676">
    <property type="entry name" value="Picornavirus_capsid"/>
</dbReference>
<dbReference type="InterPro" id="IPR043128">
    <property type="entry name" value="Rev_trsase/Diguanyl_cyclase"/>
</dbReference>
<dbReference type="InterPro" id="IPR033703">
    <property type="entry name" value="Rhv-like"/>
</dbReference>
<dbReference type="InterPro" id="IPR001205">
    <property type="entry name" value="RNA-dir_pol_C"/>
</dbReference>
<dbReference type="InterPro" id="IPR007094">
    <property type="entry name" value="RNA-dir_pol_PSvirus"/>
</dbReference>
<dbReference type="InterPro" id="IPR029053">
    <property type="entry name" value="Viral_coat"/>
</dbReference>
<dbReference type="Pfam" id="PF08727">
    <property type="entry name" value="P3A"/>
    <property type="match status" value="1"/>
</dbReference>
<dbReference type="Pfam" id="PF00548">
    <property type="entry name" value="Peptidase_C3"/>
    <property type="match status" value="1"/>
</dbReference>
<dbReference type="Pfam" id="PF02226">
    <property type="entry name" value="Pico_P1A"/>
    <property type="match status" value="1"/>
</dbReference>
<dbReference type="Pfam" id="PF00947">
    <property type="entry name" value="Pico_P2A"/>
    <property type="match status" value="1"/>
</dbReference>
<dbReference type="Pfam" id="PF01552">
    <property type="entry name" value="Pico_P2B"/>
    <property type="match status" value="1"/>
</dbReference>
<dbReference type="Pfam" id="PF00680">
    <property type="entry name" value="RdRP_1"/>
    <property type="match status" value="1"/>
</dbReference>
<dbReference type="Pfam" id="PF00073">
    <property type="entry name" value="Rhv"/>
    <property type="match status" value="3"/>
</dbReference>
<dbReference type="Pfam" id="PF00910">
    <property type="entry name" value="RNA_helicase"/>
    <property type="match status" value="1"/>
</dbReference>
<dbReference type="SUPFAM" id="SSF56672">
    <property type="entry name" value="DNA/RNA polymerases"/>
    <property type="match status" value="1"/>
</dbReference>
<dbReference type="SUPFAM" id="SSF52540">
    <property type="entry name" value="P-loop containing nucleoside triphosphate hydrolases"/>
    <property type="match status" value="1"/>
</dbReference>
<dbReference type="SUPFAM" id="SSF88633">
    <property type="entry name" value="Positive stranded ssRNA viruses"/>
    <property type="match status" value="2"/>
</dbReference>
<dbReference type="SUPFAM" id="SSF89043">
    <property type="entry name" value="Soluble domain of poliovirus core protein 3a"/>
    <property type="match status" value="1"/>
</dbReference>
<dbReference type="SUPFAM" id="SSF50494">
    <property type="entry name" value="Trypsin-like serine proteases"/>
    <property type="match status" value="2"/>
</dbReference>
<dbReference type="PROSITE" id="PS51874">
    <property type="entry name" value="PCV_3C_PRO"/>
    <property type="match status" value="1"/>
</dbReference>
<dbReference type="PROSITE" id="PS50507">
    <property type="entry name" value="RDRP_SSRNA_POS"/>
    <property type="match status" value="1"/>
</dbReference>
<dbReference type="PROSITE" id="PS51218">
    <property type="entry name" value="SF3_HELICASE_2"/>
    <property type="match status" value="1"/>
</dbReference>
<name>POLG_POL2L</name>
<accession>P06210</accession>
<proteinExistence type="evidence at protein level"/>
<sequence>MGAQVSSQKVGAHENSNRAYGGSTINYTTINYYRDSASNAASKQDFAQDPSKFTEPIKDVLIKTAPTLNSPNIEACGYSDRVMQLTLGNSTITTQEAANSVVAYGRWPEYIKDSEANPVDQPTEPDVAACRFYTLDTVTWRKESRGWWWKLPDALKDMGLFGQNMFYHYLGRAGYTVHVQCNASKFHQGALGVFAVPEMCLAGDSTTHMFTKYENANPGEKGGEFKGSFTLDTNATNPARNFCPVDYLFGSGVLAGNAFVYPHQIINLRTNNCATLVLPYVNSLSIDSMTKHNNWGIAILPLAPLDFATESSTEIPITLTIAPMCCEFNGLRNITVPRTQGLPVLNTPGSNQYLTADNYQSPCAIPEFDVTPPIDIPGEVRNMMELAEIDTMIPLNLTNQRKNTMDMYRVELNDAAHSDTPILCLSLSPASDPRLAHTMLGEILNYYTHWAGSLKFTFLFCGSMMATGKLLVSYAPPGAEAPKSRKEAMLGTHVIWDIGLQSSCTMVVPWISNTTYRQTINDSFTEGGYISMFYQTRVVVPLSTPRKMDILGFVSACNDFSVRLLRDTTHISQEAMPQGLGDLIEGVVEGVTRNALTPLTPANNLPDTQSSGPAHSKETPALTAVETGATNPLVPSDTVQTRHVIQKRTRSESTVESFFARGACVAIIEVDNDAPTKRASKLFSVWKITYKDTVQLRRKLEFFTYSRFDMEFTFVVTSNYTDANNGHALNQVYQIMYIPPGAPIPGKWNDYTWQTSSNPSVFYTYGAPPARISVPYVGIANAYSHFYDGFAKVPLAGQASTEGDSLYGAASLNDFGSLAVRVVNDHNPTKLTSKIRVYMKPKHVRVWCPRPPRAVPYYGPGVDYKDGLAPLPGKGLTTYGFGHQNKAVYTAGYKICNYHLATQEDLQNAVNIMWIRDLLVVESKAQGIDSIARCNCHTGVYYCESRRKYYPVSFTGPTFQYMEANEYYPARYQSHMLIGHGFASPGDCGGILRCQHGVIGIITAGGEGLVAFSDIRDLYAYEEEAMEQGVSNYIESLGAAFGSGFTQQIGNKISELTSMVTSTITEKLLKNLIKIISSLVIITRNYEDTTTVLATLALLGCDASPWQWLKKKACDILEIPYIMRQGDSWLKKFTEACNAAKGLEWVSNKISKFIDWLKEKIIPQARDKLEFVTKLKQLEMLENQIATIHQSCPSQEHQEILFNNVRWLSIQSKRFAPLYAVEAKRIQKLEHTINNYVQFKSKHRIEPVCLLVHGSPGTGKSVATNLIARAIAEKENTSTYSLPPDPSHFDGYKQQGVVIMDDLNQNPDGADMKLFCQMVSTVEFIPPMASLEEKGILFTSNYVLASTNSSRITPPTVAHSDALARRFAFDMDIQIMSEYSRDGKLNMAMATEMCKNCHHPANFKRCCPLVCGKAIQLMDKSSRVRYSIDQITTMIINERNRRSSIGNCMEALFQGPLQYKDLKIDIKTTPPPECINDLLQAVDSQEVRDYCEKKGWIVDITSQVQTERNINRAMTILQAVTTFAAVAGVVYVMYKLFAGHQGAYTGLPNKRPNVPTIRTAKVQGPGFDYAVAMAKRNILTATTIKGEFTMLGVHDNVAILPTHASPGETIVIDGKEVEVLDAKALEDQAGTNLEITIVTLKRNEKFRDIRPHIPTQITETNDGVLIVNTSKYPNMYVPVGAVTEQGYLNLSGRQTARTLMYNFPTRAGQCGGVITCTGKVIGMHVGGNGSHGFAAALKRSYFTQSQGEIQWMRPSKEVGYPVINAPSKTKLEPSAFHYVFEGVKEPAVLTKSDPRLKTDFEEAIFSKYVGNKITEVDEYMKEAVDHYAGQLMSLDINTEQMCLEDAMYGTDGLEALDLSTSAGYPYVAMGKKKRDILNKQTRDTKEMQRLLDTYGINLPLVTYVKDELRSKTKVEQGKSRLIEASSLNDSVAMRMAFGNLYAAFHKNPGVVTGSAVGCDPDLFWSKIPVLMEEKLFAFDYTGYDASLSPAWFEALKMVLEKIGFGDRVDYIDYLNHSHHLYKNKTYCVKGGMPSGCSGTSIFNSMINNLIIRTLLLKTYKGIDLDHLKMIAYGDDVIASYPHEVDASLLAQSGKDYGLTMTPADKSATFETVTWENVTFLKRFFRADEKYPFLVHPVMPMKEIHESIRWTKDPRNTQDHVRSLCLLAWHNGEEEYNKFLAKIRSVPIGRALLLPEYSTLYRRWLDSF</sequence>
<organism>
    <name type="scientific">Poliovirus type 2 (strain Lansing)</name>
    <dbReference type="NCBI Taxonomy" id="12084"/>
    <lineage>
        <taxon>Viruses</taxon>
        <taxon>Riboviria</taxon>
        <taxon>Orthornavirae</taxon>
        <taxon>Pisuviricota</taxon>
        <taxon>Pisoniviricetes</taxon>
        <taxon>Picornavirales</taxon>
        <taxon>Picornaviridae</taxon>
        <taxon>Ensavirinae</taxon>
        <taxon>Enterovirus</taxon>
        <taxon>Enterovirus C</taxon>
    </lineage>
</organism>